<organism>
    <name type="scientific">Stutzerimonas stutzeri (strain A1501)</name>
    <name type="common">Pseudomonas stutzeri</name>
    <dbReference type="NCBI Taxonomy" id="379731"/>
    <lineage>
        <taxon>Bacteria</taxon>
        <taxon>Pseudomonadati</taxon>
        <taxon>Pseudomonadota</taxon>
        <taxon>Gammaproteobacteria</taxon>
        <taxon>Pseudomonadales</taxon>
        <taxon>Pseudomonadaceae</taxon>
        <taxon>Stutzerimonas</taxon>
    </lineage>
</organism>
<keyword id="KW-0489">Methyltransferase</keyword>
<keyword id="KW-1185">Reference proteome</keyword>
<keyword id="KW-0949">S-adenosyl-L-methionine</keyword>
<keyword id="KW-0808">Transferase</keyword>
<keyword id="KW-0819">tRNA processing</keyword>
<dbReference type="EC" id="2.1.1.-" evidence="1"/>
<dbReference type="EC" id="2.1.1.35" evidence="1"/>
<dbReference type="EMBL" id="CP000304">
    <property type="protein sequence ID" value="ABP78616.1"/>
    <property type="molecule type" value="Genomic_DNA"/>
</dbReference>
<dbReference type="RefSeq" id="WP_011912109.1">
    <property type="nucleotide sequence ID" value="NC_009434.1"/>
</dbReference>
<dbReference type="SMR" id="A4VI15"/>
<dbReference type="KEGG" id="psa:PST_0919"/>
<dbReference type="eggNOG" id="COG2265">
    <property type="taxonomic scope" value="Bacteria"/>
</dbReference>
<dbReference type="HOGENOM" id="CLU_043022_0_0_6"/>
<dbReference type="Proteomes" id="UP000000233">
    <property type="component" value="Chromosome"/>
</dbReference>
<dbReference type="GO" id="GO:0005829">
    <property type="term" value="C:cytosol"/>
    <property type="evidence" value="ECO:0007669"/>
    <property type="project" value="TreeGrafter"/>
</dbReference>
<dbReference type="GO" id="GO:0019843">
    <property type="term" value="F:rRNA binding"/>
    <property type="evidence" value="ECO:0007669"/>
    <property type="project" value="TreeGrafter"/>
</dbReference>
<dbReference type="GO" id="GO:0030697">
    <property type="term" value="F:tRNA (uracil(54)-C5)-methyltransferase activity, S-adenosyl methionine-dependent"/>
    <property type="evidence" value="ECO:0007669"/>
    <property type="project" value="UniProtKB-UniRule"/>
</dbReference>
<dbReference type="GO" id="GO:0000049">
    <property type="term" value="F:tRNA binding"/>
    <property type="evidence" value="ECO:0007669"/>
    <property type="project" value="TreeGrafter"/>
</dbReference>
<dbReference type="GO" id="GO:0030488">
    <property type="term" value="P:tRNA methylation"/>
    <property type="evidence" value="ECO:0007669"/>
    <property type="project" value="UniProtKB-UniRule"/>
</dbReference>
<dbReference type="CDD" id="cd02440">
    <property type="entry name" value="AdoMet_MTases"/>
    <property type="match status" value="1"/>
</dbReference>
<dbReference type="FunFam" id="2.40.50.1070:FF:000001">
    <property type="entry name" value="tRNA/tmRNA (uracil-C(5))-methyltransferase"/>
    <property type="match status" value="1"/>
</dbReference>
<dbReference type="FunFam" id="3.40.50.150:FF:000012">
    <property type="entry name" value="tRNA/tmRNA (uracil-C(5))-methyltransferase"/>
    <property type="match status" value="1"/>
</dbReference>
<dbReference type="Gene3D" id="2.40.50.1070">
    <property type="match status" value="1"/>
</dbReference>
<dbReference type="Gene3D" id="3.40.50.150">
    <property type="entry name" value="Vaccinia Virus protein VP39"/>
    <property type="match status" value="1"/>
</dbReference>
<dbReference type="HAMAP" id="MF_01011">
    <property type="entry name" value="RNA_methyltr_TrmA"/>
    <property type="match status" value="1"/>
</dbReference>
<dbReference type="InterPro" id="IPR030390">
    <property type="entry name" value="MeTrfase_TrmA_AS"/>
</dbReference>
<dbReference type="InterPro" id="IPR030391">
    <property type="entry name" value="MeTrfase_TrmA_CS"/>
</dbReference>
<dbReference type="InterPro" id="IPR029063">
    <property type="entry name" value="SAM-dependent_MTases_sf"/>
</dbReference>
<dbReference type="InterPro" id="IPR011869">
    <property type="entry name" value="TrmA_MeTrfase"/>
</dbReference>
<dbReference type="InterPro" id="IPR010280">
    <property type="entry name" value="U5_MeTrfase_fam"/>
</dbReference>
<dbReference type="NCBIfam" id="TIGR02143">
    <property type="entry name" value="trmA_only"/>
    <property type="match status" value="1"/>
</dbReference>
<dbReference type="PANTHER" id="PTHR47790">
    <property type="entry name" value="TRNA/TMRNA (URACIL-C(5))-METHYLTRANSFERASE"/>
    <property type="match status" value="1"/>
</dbReference>
<dbReference type="PANTHER" id="PTHR47790:SF2">
    <property type="entry name" value="TRNA_TMRNA (URACIL-C(5))-METHYLTRANSFERASE"/>
    <property type="match status" value="1"/>
</dbReference>
<dbReference type="Pfam" id="PF05958">
    <property type="entry name" value="tRNA_U5-meth_tr"/>
    <property type="match status" value="1"/>
</dbReference>
<dbReference type="SUPFAM" id="SSF53335">
    <property type="entry name" value="S-adenosyl-L-methionine-dependent methyltransferases"/>
    <property type="match status" value="1"/>
</dbReference>
<dbReference type="PROSITE" id="PS51687">
    <property type="entry name" value="SAM_MT_RNA_M5U"/>
    <property type="match status" value="1"/>
</dbReference>
<dbReference type="PROSITE" id="PS01230">
    <property type="entry name" value="TRMA_1"/>
    <property type="match status" value="1"/>
</dbReference>
<dbReference type="PROSITE" id="PS01231">
    <property type="entry name" value="TRMA_2"/>
    <property type="match status" value="1"/>
</dbReference>
<evidence type="ECO:0000255" key="1">
    <source>
        <dbReference type="HAMAP-Rule" id="MF_01011"/>
    </source>
</evidence>
<gene>
    <name evidence="1" type="primary">trmA</name>
    <name type="ordered locus">PST_0919</name>
</gene>
<protein>
    <recommendedName>
        <fullName evidence="1">tRNA/tmRNA (uracil-C(5))-methyltransferase</fullName>
        <ecNumber evidence="1">2.1.1.-</ecNumber>
        <ecNumber evidence="1">2.1.1.35</ecNumber>
    </recommendedName>
    <alternativeName>
        <fullName evidence="1">tRNA (uracil(54)-C(5))-methyltransferase</fullName>
    </alternativeName>
    <alternativeName>
        <fullName evidence="1">tRNA(m5U54)-methyltransferase</fullName>
        <shortName evidence="1">RUMT</shortName>
    </alternativeName>
    <alternativeName>
        <fullName evidence="1">tmRNA (uracil(341)-C(5))-methyltransferase</fullName>
    </alternativeName>
</protein>
<proteinExistence type="inferred from homology"/>
<name>TRMA_STUS1</name>
<sequence length="362" mass="41013">MPLPQLDPAQYAAQLAEKAARLEELLAPFDAPAAEVFDSPREHYRLRAEFRLWREGGQRHYAMFEQGDKHKAILIDDFPIASRRINELMPQLKAAWQASEVLSFKLFQVEFLTTLSGDALITLAYHRPLDEAWQAEAEQLAADLGVSLVGRSKGKRIVIGRDYVEEQLVVAGRSFRYRQPEGAFTQPNGEVCQKMLNWAHEALGERDDDLLELYCGNGNFTLPLATRVRRVLATEISKTSVNAALANIEDNGLDNIELVRLSAEELTQALNEVRPFRRLAGIDLKSYSFGSVFVDPPRAGMDPDTCELTRRFERILYISCNPETLAQNIAQLADTHRIERCALFDQFPYTHHMEAGVLLVRR</sequence>
<feature type="chain" id="PRO_1000062995" description="tRNA/tmRNA (uracil-C(5))-methyltransferase">
    <location>
        <begin position="1"/>
        <end position="362"/>
    </location>
</feature>
<feature type="active site" description="Nucleophile" evidence="1">
    <location>
        <position position="320"/>
    </location>
</feature>
<feature type="active site" description="Proton acceptor" evidence="1">
    <location>
        <position position="354"/>
    </location>
</feature>
<feature type="binding site" evidence="1">
    <location>
        <position position="186"/>
    </location>
    <ligand>
        <name>S-adenosyl-L-methionine</name>
        <dbReference type="ChEBI" id="CHEBI:59789"/>
    </ligand>
</feature>
<feature type="binding site" evidence="1">
    <location>
        <position position="214"/>
    </location>
    <ligand>
        <name>S-adenosyl-L-methionine</name>
        <dbReference type="ChEBI" id="CHEBI:59789"/>
    </ligand>
</feature>
<feature type="binding site" evidence="1">
    <location>
        <position position="219"/>
    </location>
    <ligand>
        <name>S-adenosyl-L-methionine</name>
        <dbReference type="ChEBI" id="CHEBI:59789"/>
    </ligand>
</feature>
<feature type="binding site" evidence="1">
    <location>
        <position position="235"/>
    </location>
    <ligand>
        <name>S-adenosyl-L-methionine</name>
        <dbReference type="ChEBI" id="CHEBI:59789"/>
    </ligand>
</feature>
<feature type="binding site" evidence="1">
    <location>
        <position position="295"/>
    </location>
    <ligand>
        <name>S-adenosyl-L-methionine</name>
        <dbReference type="ChEBI" id="CHEBI:59789"/>
    </ligand>
</feature>
<accession>A4VI15</accession>
<reference key="1">
    <citation type="journal article" date="2008" name="Proc. Natl. Acad. Sci. U.S.A.">
        <title>Nitrogen fixation island and rhizosphere competence traits in the genome of root-associated Pseudomonas stutzeri A1501.</title>
        <authorList>
            <person name="Yan Y."/>
            <person name="Yang J."/>
            <person name="Dou Y."/>
            <person name="Chen M."/>
            <person name="Ping S."/>
            <person name="Peng J."/>
            <person name="Lu W."/>
            <person name="Zhang W."/>
            <person name="Yao Z."/>
            <person name="Li H."/>
            <person name="Liu W."/>
            <person name="He S."/>
            <person name="Geng L."/>
            <person name="Zhang X."/>
            <person name="Yang F."/>
            <person name="Yu H."/>
            <person name="Zhan Y."/>
            <person name="Li D."/>
            <person name="Lin Z."/>
            <person name="Wang Y."/>
            <person name="Elmerich C."/>
            <person name="Lin M."/>
            <person name="Jin Q."/>
        </authorList>
    </citation>
    <scope>NUCLEOTIDE SEQUENCE [LARGE SCALE GENOMIC DNA]</scope>
    <source>
        <strain>A1501</strain>
    </source>
</reference>
<comment type="function">
    <text evidence="1">Dual-specificity methyltransferase that catalyzes the formation of 5-methyluridine at position 54 (m5U54) in all tRNAs, and that of position 341 (m5U341) in tmRNA (transfer-mRNA).</text>
</comment>
<comment type="catalytic activity">
    <reaction evidence="1">
        <text>uridine(54) in tRNA + S-adenosyl-L-methionine = 5-methyluridine(54) in tRNA + S-adenosyl-L-homocysteine + H(+)</text>
        <dbReference type="Rhea" id="RHEA:42712"/>
        <dbReference type="Rhea" id="RHEA-COMP:10167"/>
        <dbReference type="Rhea" id="RHEA-COMP:10193"/>
        <dbReference type="ChEBI" id="CHEBI:15378"/>
        <dbReference type="ChEBI" id="CHEBI:57856"/>
        <dbReference type="ChEBI" id="CHEBI:59789"/>
        <dbReference type="ChEBI" id="CHEBI:65315"/>
        <dbReference type="ChEBI" id="CHEBI:74447"/>
        <dbReference type="EC" id="2.1.1.35"/>
    </reaction>
</comment>
<comment type="catalytic activity">
    <reaction evidence="1">
        <text>uridine(341) in tmRNA + S-adenosyl-L-methionine = 5-methyluridine(341) in tmRNA + S-adenosyl-L-homocysteine + H(+)</text>
        <dbReference type="Rhea" id="RHEA:43612"/>
        <dbReference type="Rhea" id="RHEA-COMP:10630"/>
        <dbReference type="Rhea" id="RHEA-COMP:10631"/>
        <dbReference type="ChEBI" id="CHEBI:15378"/>
        <dbReference type="ChEBI" id="CHEBI:57856"/>
        <dbReference type="ChEBI" id="CHEBI:59789"/>
        <dbReference type="ChEBI" id="CHEBI:65315"/>
        <dbReference type="ChEBI" id="CHEBI:74447"/>
    </reaction>
</comment>
<comment type="similarity">
    <text evidence="1">Belongs to the class I-like SAM-binding methyltransferase superfamily. RNA M5U methyltransferase family. TrmA subfamily.</text>
</comment>